<keyword id="KW-0067">ATP-binding</keyword>
<keyword id="KW-0963">Cytoplasm</keyword>
<keyword id="KW-0547">Nucleotide-binding</keyword>
<keyword id="KW-1185">Reference proteome</keyword>
<keyword id="KW-0694">RNA-binding</keyword>
<keyword id="KW-0784">Thiamine biosynthesis</keyword>
<keyword id="KW-0808">Transferase</keyword>
<keyword id="KW-0820">tRNA-binding</keyword>
<gene>
    <name evidence="1" type="primary">thiI</name>
    <name type="ordered locus">MYPE5860</name>
</gene>
<name>THII_MALP2</name>
<accession>Q8EVH8</accession>
<proteinExistence type="inferred from homology"/>
<dbReference type="EC" id="2.8.1.4" evidence="1"/>
<dbReference type="EMBL" id="BA000026">
    <property type="protein sequence ID" value="BAC44376.1"/>
    <property type="molecule type" value="Genomic_DNA"/>
</dbReference>
<dbReference type="RefSeq" id="WP_011077408.1">
    <property type="nucleotide sequence ID" value="NC_004432.1"/>
</dbReference>
<dbReference type="SMR" id="Q8EVH8"/>
<dbReference type="FunCoup" id="Q8EVH8">
    <property type="interactions" value="55"/>
</dbReference>
<dbReference type="STRING" id="272633.gene:10731703"/>
<dbReference type="KEGG" id="mpe:MYPE5860"/>
<dbReference type="eggNOG" id="COG0301">
    <property type="taxonomic scope" value="Bacteria"/>
</dbReference>
<dbReference type="HOGENOM" id="CLU_037952_4_0_14"/>
<dbReference type="InParanoid" id="Q8EVH8"/>
<dbReference type="UniPathway" id="UPA00060"/>
<dbReference type="Proteomes" id="UP000002522">
    <property type="component" value="Chromosome"/>
</dbReference>
<dbReference type="GO" id="GO:0005829">
    <property type="term" value="C:cytosol"/>
    <property type="evidence" value="ECO:0007669"/>
    <property type="project" value="TreeGrafter"/>
</dbReference>
<dbReference type="GO" id="GO:0005524">
    <property type="term" value="F:ATP binding"/>
    <property type="evidence" value="ECO:0007669"/>
    <property type="project" value="UniProtKB-UniRule"/>
</dbReference>
<dbReference type="GO" id="GO:0004810">
    <property type="term" value="F:CCA tRNA nucleotidyltransferase activity"/>
    <property type="evidence" value="ECO:0007669"/>
    <property type="project" value="InterPro"/>
</dbReference>
<dbReference type="GO" id="GO:0000049">
    <property type="term" value="F:tRNA binding"/>
    <property type="evidence" value="ECO:0007669"/>
    <property type="project" value="UniProtKB-UniRule"/>
</dbReference>
<dbReference type="GO" id="GO:0140741">
    <property type="term" value="F:tRNA-uracil-4 sulfurtransferase activity"/>
    <property type="evidence" value="ECO:0007669"/>
    <property type="project" value="UniProtKB-EC"/>
</dbReference>
<dbReference type="GO" id="GO:0009228">
    <property type="term" value="P:thiamine biosynthetic process"/>
    <property type="evidence" value="ECO:0007669"/>
    <property type="project" value="UniProtKB-KW"/>
</dbReference>
<dbReference type="GO" id="GO:0009229">
    <property type="term" value="P:thiamine diphosphate biosynthetic process"/>
    <property type="evidence" value="ECO:0007669"/>
    <property type="project" value="UniProtKB-UniRule"/>
</dbReference>
<dbReference type="GO" id="GO:0052837">
    <property type="term" value="P:thiazole biosynthetic process"/>
    <property type="evidence" value="ECO:0007669"/>
    <property type="project" value="TreeGrafter"/>
</dbReference>
<dbReference type="GO" id="GO:0002937">
    <property type="term" value="P:tRNA 4-thiouridine biosynthesis"/>
    <property type="evidence" value="ECO:0007669"/>
    <property type="project" value="TreeGrafter"/>
</dbReference>
<dbReference type="CDD" id="cd01712">
    <property type="entry name" value="PPase_ThiI"/>
    <property type="match status" value="1"/>
</dbReference>
<dbReference type="CDD" id="cd11716">
    <property type="entry name" value="THUMP_ThiI"/>
    <property type="match status" value="1"/>
</dbReference>
<dbReference type="FunFam" id="3.40.50.620:FF:000053">
    <property type="entry name" value="Probable tRNA sulfurtransferase"/>
    <property type="match status" value="1"/>
</dbReference>
<dbReference type="Gene3D" id="3.30.2130.30">
    <property type="match status" value="1"/>
</dbReference>
<dbReference type="Gene3D" id="3.40.50.620">
    <property type="entry name" value="HUPs"/>
    <property type="match status" value="1"/>
</dbReference>
<dbReference type="HAMAP" id="MF_00021">
    <property type="entry name" value="ThiI"/>
    <property type="match status" value="1"/>
</dbReference>
<dbReference type="InterPro" id="IPR014729">
    <property type="entry name" value="Rossmann-like_a/b/a_fold"/>
</dbReference>
<dbReference type="InterPro" id="IPR020536">
    <property type="entry name" value="ThiI_AANH"/>
</dbReference>
<dbReference type="InterPro" id="IPR054173">
    <property type="entry name" value="ThiI_fer"/>
</dbReference>
<dbReference type="InterPro" id="IPR049961">
    <property type="entry name" value="ThiI_N"/>
</dbReference>
<dbReference type="InterPro" id="IPR004114">
    <property type="entry name" value="THUMP_dom"/>
</dbReference>
<dbReference type="InterPro" id="IPR049962">
    <property type="entry name" value="THUMP_ThiI"/>
</dbReference>
<dbReference type="InterPro" id="IPR003720">
    <property type="entry name" value="tRNA_STrfase"/>
</dbReference>
<dbReference type="InterPro" id="IPR050102">
    <property type="entry name" value="tRNA_sulfurtransferase_ThiI"/>
</dbReference>
<dbReference type="NCBIfam" id="TIGR00342">
    <property type="entry name" value="tRNA uracil 4-sulfurtransferase ThiI"/>
    <property type="match status" value="1"/>
</dbReference>
<dbReference type="PANTHER" id="PTHR43209">
    <property type="entry name" value="TRNA SULFURTRANSFERASE"/>
    <property type="match status" value="1"/>
</dbReference>
<dbReference type="PANTHER" id="PTHR43209:SF1">
    <property type="entry name" value="TRNA SULFURTRANSFERASE"/>
    <property type="match status" value="1"/>
</dbReference>
<dbReference type="Pfam" id="PF02568">
    <property type="entry name" value="ThiI"/>
    <property type="match status" value="1"/>
</dbReference>
<dbReference type="Pfam" id="PF22025">
    <property type="entry name" value="ThiI_fer"/>
    <property type="match status" value="1"/>
</dbReference>
<dbReference type="Pfam" id="PF02926">
    <property type="entry name" value="THUMP"/>
    <property type="match status" value="1"/>
</dbReference>
<dbReference type="SMART" id="SM00981">
    <property type="entry name" value="THUMP"/>
    <property type="match status" value="1"/>
</dbReference>
<dbReference type="SUPFAM" id="SSF52402">
    <property type="entry name" value="Adenine nucleotide alpha hydrolases-like"/>
    <property type="match status" value="1"/>
</dbReference>
<dbReference type="SUPFAM" id="SSF143437">
    <property type="entry name" value="THUMP domain-like"/>
    <property type="match status" value="1"/>
</dbReference>
<dbReference type="PROSITE" id="PS51165">
    <property type="entry name" value="THUMP"/>
    <property type="match status" value="1"/>
</dbReference>
<feature type="chain" id="PRO_0000154850" description="Probable tRNA sulfurtransferase">
    <location>
        <begin position="1"/>
        <end position="383"/>
    </location>
</feature>
<feature type="domain" description="THUMP" evidence="1">
    <location>
        <begin position="58"/>
        <end position="158"/>
    </location>
</feature>
<feature type="binding site" evidence="1">
    <location>
        <begin position="176"/>
        <end position="177"/>
    </location>
    <ligand>
        <name>ATP</name>
        <dbReference type="ChEBI" id="CHEBI:30616"/>
    </ligand>
</feature>
<feature type="binding site" evidence="1">
    <location>
        <begin position="201"/>
        <end position="202"/>
    </location>
    <ligand>
        <name>ATP</name>
        <dbReference type="ChEBI" id="CHEBI:30616"/>
    </ligand>
</feature>
<feature type="binding site" evidence="1">
    <location>
        <position position="259"/>
    </location>
    <ligand>
        <name>ATP</name>
        <dbReference type="ChEBI" id="CHEBI:30616"/>
    </ligand>
</feature>
<feature type="binding site" evidence="1">
    <location>
        <position position="281"/>
    </location>
    <ligand>
        <name>ATP</name>
        <dbReference type="ChEBI" id="CHEBI:30616"/>
    </ligand>
</feature>
<feature type="binding site" evidence="1">
    <location>
        <position position="290"/>
    </location>
    <ligand>
        <name>ATP</name>
        <dbReference type="ChEBI" id="CHEBI:30616"/>
    </ligand>
</feature>
<evidence type="ECO:0000255" key="1">
    <source>
        <dbReference type="HAMAP-Rule" id="MF_00021"/>
    </source>
</evidence>
<protein>
    <recommendedName>
        <fullName evidence="1">Probable tRNA sulfurtransferase</fullName>
        <ecNumber evidence="1">2.8.1.4</ecNumber>
    </recommendedName>
    <alternativeName>
        <fullName evidence="1">Sulfur carrier protein ThiS sulfurtransferase</fullName>
    </alternativeName>
    <alternativeName>
        <fullName evidence="1">Thiamine biosynthesis protein ThiI</fullName>
    </alternativeName>
    <alternativeName>
        <fullName evidence="1">tRNA 4-thiouridine synthase</fullName>
    </alternativeName>
</protein>
<comment type="function">
    <text evidence="1">Catalyzes the ATP-dependent transfer of a sulfur to tRNA to produce 4-thiouridine in position 8 of tRNAs, which functions as a near-UV photosensor. Also catalyzes the transfer of sulfur to the sulfur carrier protein ThiS, forming ThiS-thiocarboxylate. This is a step in the synthesis of thiazole, in the thiamine biosynthesis pathway. The sulfur is donated as persulfide by IscS.</text>
</comment>
<comment type="catalytic activity">
    <reaction evidence="1">
        <text>[ThiI sulfur-carrier protein]-S-sulfanyl-L-cysteine + a uridine in tRNA + 2 reduced [2Fe-2S]-[ferredoxin] + ATP + H(+) = [ThiI sulfur-carrier protein]-L-cysteine + a 4-thiouridine in tRNA + 2 oxidized [2Fe-2S]-[ferredoxin] + AMP + diphosphate</text>
        <dbReference type="Rhea" id="RHEA:24176"/>
        <dbReference type="Rhea" id="RHEA-COMP:10000"/>
        <dbReference type="Rhea" id="RHEA-COMP:10001"/>
        <dbReference type="Rhea" id="RHEA-COMP:13337"/>
        <dbReference type="Rhea" id="RHEA-COMP:13338"/>
        <dbReference type="Rhea" id="RHEA-COMP:13339"/>
        <dbReference type="Rhea" id="RHEA-COMP:13340"/>
        <dbReference type="ChEBI" id="CHEBI:15378"/>
        <dbReference type="ChEBI" id="CHEBI:29950"/>
        <dbReference type="ChEBI" id="CHEBI:30616"/>
        <dbReference type="ChEBI" id="CHEBI:33019"/>
        <dbReference type="ChEBI" id="CHEBI:33737"/>
        <dbReference type="ChEBI" id="CHEBI:33738"/>
        <dbReference type="ChEBI" id="CHEBI:61963"/>
        <dbReference type="ChEBI" id="CHEBI:65315"/>
        <dbReference type="ChEBI" id="CHEBI:136798"/>
        <dbReference type="ChEBI" id="CHEBI:456215"/>
        <dbReference type="EC" id="2.8.1.4"/>
    </reaction>
</comment>
<comment type="catalytic activity">
    <reaction evidence="1">
        <text>[ThiS sulfur-carrier protein]-C-terminal Gly-Gly-AMP + S-sulfanyl-L-cysteinyl-[cysteine desulfurase] + AH2 = [ThiS sulfur-carrier protein]-C-terminal-Gly-aminoethanethioate + L-cysteinyl-[cysteine desulfurase] + A + AMP + 2 H(+)</text>
        <dbReference type="Rhea" id="RHEA:43340"/>
        <dbReference type="Rhea" id="RHEA-COMP:12157"/>
        <dbReference type="Rhea" id="RHEA-COMP:12158"/>
        <dbReference type="Rhea" id="RHEA-COMP:12910"/>
        <dbReference type="Rhea" id="RHEA-COMP:19908"/>
        <dbReference type="ChEBI" id="CHEBI:13193"/>
        <dbReference type="ChEBI" id="CHEBI:15378"/>
        <dbReference type="ChEBI" id="CHEBI:17499"/>
        <dbReference type="ChEBI" id="CHEBI:29950"/>
        <dbReference type="ChEBI" id="CHEBI:61963"/>
        <dbReference type="ChEBI" id="CHEBI:90618"/>
        <dbReference type="ChEBI" id="CHEBI:232372"/>
        <dbReference type="ChEBI" id="CHEBI:456215"/>
    </reaction>
</comment>
<comment type="pathway">
    <text evidence="1">Cofactor biosynthesis; thiamine diphosphate biosynthesis.</text>
</comment>
<comment type="subcellular location">
    <subcellularLocation>
        <location evidence="1">Cytoplasm</location>
    </subcellularLocation>
</comment>
<comment type="similarity">
    <text evidence="1">Belongs to the ThiI family.</text>
</comment>
<reference key="1">
    <citation type="journal article" date="2002" name="Nucleic Acids Res.">
        <title>The complete genomic sequence of Mycoplasma penetrans, an intracellular bacterial pathogen in humans.</title>
        <authorList>
            <person name="Sasaki Y."/>
            <person name="Ishikawa J."/>
            <person name="Yamashita A."/>
            <person name="Oshima K."/>
            <person name="Kenri T."/>
            <person name="Furuya K."/>
            <person name="Yoshino C."/>
            <person name="Horino A."/>
            <person name="Shiba T."/>
            <person name="Sasaki T."/>
            <person name="Hattori M."/>
        </authorList>
    </citation>
    <scope>NUCLEOTIDE SEQUENCE [LARGE SCALE GENOMIC DNA]</scope>
    <source>
        <strain>HF-2</strain>
    </source>
</reference>
<organism>
    <name type="scientific">Malacoplasma penetrans (strain HF-2)</name>
    <name type="common">Mycoplasma penetrans</name>
    <dbReference type="NCBI Taxonomy" id="272633"/>
    <lineage>
        <taxon>Bacteria</taxon>
        <taxon>Bacillati</taxon>
        <taxon>Mycoplasmatota</taxon>
        <taxon>Mycoplasmoidales</taxon>
        <taxon>Mycoplasmoidaceae</taxon>
        <taxon>Malacoplasma</taxon>
    </lineage>
</organism>
<sequence>MKKHINIKFGELFLKGKNKKEFIKALFKNVNKALSDFEFKLLDKHSMFTLEYCSEDENEIIHILKMIPGIHHFFLCLEAKTDIKEIAKVANGFDKKYKTFKIEVKRRYKEFLDQTEIKKEVATYILKNNEIKVDVHNPELTINIEIYDENKSYVWFDKILGVGGLPIGVNGRCLSLLSGGIDSPVASFLLQKRGQQVDYLTFITDDVTEITLNKLKSLIKQITLNYKIYKPRFFIVDFTKVQHELIHMSNEKYRITLMRRSFYRIAQQLAIKYKMNSLICGDSLGQVASQTIESINTISQVCDKMEIFRPLLTFDKVEIIEIAKQIGTYEISISEHEDVCSMFAPKHPITKPKLSIALALENELELLKSLEDRAVANVQIIKE</sequence>